<accession>Q2YY39</accession>
<comment type="similarity">
    <text evidence="1">Belongs to the bacilliredoxin family.</text>
</comment>
<gene>
    <name type="ordered locus">SAB1283c</name>
</gene>
<protein>
    <recommendedName>
        <fullName evidence="1">Bacilliredoxin SAB1283c</fullName>
    </recommendedName>
</protein>
<feature type="chain" id="PRO_0000271995" description="Bacilliredoxin SAB1283c">
    <location>
        <begin position="1"/>
        <end position="145"/>
    </location>
</feature>
<name>Y1283_STAAB</name>
<sequence length="145" mass="16014">MNAYDAYMKEIAQQMRGELTQNGFTSLETSEAVSEYMNQVNADDTTFVVINSTCGCAAGLARPAAVAVATQNEHRPTNTVTVFAGQDKEATATMREFIQQAPSSPSYALFKGQDLVYFMPREFIEGRDINDIAMDLKDAFDENCK</sequence>
<reference key="1">
    <citation type="journal article" date="2007" name="PLoS ONE">
        <title>Molecular correlates of host specialization in Staphylococcus aureus.</title>
        <authorList>
            <person name="Herron-Olson L."/>
            <person name="Fitzgerald J.R."/>
            <person name="Musser J.M."/>
            <person name="Kapur V."/>
        </authorList>
    </citation>
    <scope>NUCLEOTIDE SEQUENCE [LARGE SCALE GENOMIC DNA]</scope>
    <source>
        <strain>bovine RF122 / ET3-1</strain>
    </source>
</reference>
<proteinExistence type="inferred from homology"/>
<organism>
    <name type="scientific">Staphylococcus aureus (strain bovine RF122 / ET3-1)</name>
    <dbReference type="NCBI Taxonomy" id="273036"/>
    <lineage>
        <taxon>Bacteria</taxon>
        <taxon>Bacillati</taxon>
        <taxon>Bacillota</taxon>
        <taxon>Bacilli</taxon>
        <taxon>Bacillales</taxon>
        <taxon>Staphylococcaceae</taxon>
        <taxon>Staphylococcus</taxon>
    </lineage>
</organism>
<evidence type="ECO:0000305" key="1"/>
<dbReference type="EMBL" id="AJ938182">
    <property type="protein sequence ID" value="CAI80972.1"/>
    <property type="molecule type" value="Genomic_DNA"/>
</dbReference>
<dbReference type="SMR" id="Q2YY39"/>
<dbReference type="KEGG" id="sab:SAB1283c"/>
<dbReference type="HOGENOM" id="CLU_132521_0_0_9"/>
<dbReference type="GO" id="GO:0045454">
    <property type="term" value="P:cell redox homeostasis"/>
    <property type="evidence" value="ECO:0000250"/>
    <property type="project" value="UniProtKB"/>
</dbReference>
<dbReference type="Gene3D" id="3.40.30.10">
    <property type="entry name" value="Glutaredoxin"/>
    <property type="match status" value="1"/>
</dbReference>
<dbReference type="InterPro" id="IPR009474">
    <property type="entry name" value="BrxB/BrxA"/>
</dbReference>
<dbReference type="NCBIfam" id="TIGR04191">
    <property type="entry name" value="YphP_YqiW"/>
    <property type="match status" value="1"/>
</dbReference>
<dbReference type="PANTHER" id="PTHR40052:SF2">
    <property type="entry name" value="BACILLIREDOXIN BRXA"/>
    <property type="match status" value="1"/>
</dbReference>
<dbReference type="PANTHER" id="PTHR40052">
    <property type="entry name" value="UPF0403 PROTEIN YQIW-RELATED"/>
    <property type="match status" value="1"/>
</dbReference>
<dbReference type="Pfam" id="PF06491">
    <property type="entry name" value="Disulph_isomer"/>
    <property type="match status" value="1"/>
</dbReference>